<feature type="signal peptide" evidence="2">
    <location>
        <begin position="1"/>
        <end position="18"/>
    </location>
</feature>
<feature type="propeptide" id="PRO_0000003104" evidence="3">
    <location>
        <begin position="19"/>
        <end position="43"/>
    </location>
</feature>
<feature type="peptide" id="PRO_0000003105" description="Maximin-3">
    <location>
        <begin position="44"/>
        <end position="70"/>
    </location>
</feature>
<feature type="propeptide" id="PRO_0000003106" evidence="1">
    <location>
        <begin position="74"/>
        <end position="123"/>
    </location>
</feature>
<feature type="peptide" id="PRO_0000003107" description="Maximin-H5">
    <location>
        <begin position="124"/>
        <end position="143"/>
    </location>
</feature>
<feature type="modified residue" description="Leucine amide" evidence="4">
    <location>
        <position position="143"/>
    </location>
</feature>
<feature type="sequence conflict" description="In Ref. 2; AAX50227." evidence="5" ref="2">
    <original>F</original>
    <variation>V</variation>
    <location>
        <position position="7"/>
    </location>
</feature>
<feature type="sequence conflict" description="In Ref. 2; AAX50227." evidence="5" ref="2">
    <original>E</original>
    <variation>V</variation>
    <location>
        <position position="80"/>
    </location>
</feature>
<dbReference type="EMBL" id="AF515614">
    <property type="protein sequence ID" value="AAM95609.1"/>
    <property type="molecule type" value="mRNA"/>
</dbReference>
<dbReference type="EMBL" id="AY849006">
    <property type="protein sequence ID" value="AAX50227.1"/>
    <property type="molecule type" value="mRNA"/>
</dbReference>
<dbReference type="SMR" id="Q8JHE1"/>
<dbReference type="GO" id="GO:0005576">
    <property type="term" value="C:extracellular region"/>
    <property type="evidence" value="ECO:0007669"/>
    <property type="project" value="UniProtKB-SubCell"/>
</dbReference>
<dbReference type="GO" id="GO:0090729">
    <property type="term" value="F:toxin activity"/>
    <property type="evidence" value="ECO:0007669"/>
    <property type="project" value="UniProtKB-KW"/>
</dbReference>
<dbReference type="GO" id="GO:0042742">
    <property type="term" value="P:defense response to bacterium"/>
    <property type="evidence" value="ECO:0007669"/>
    <property type="project" value="UniProtKB-KW"/>
</dbReference>
<dbReference type="GO" id="GO:0050832">
    <property type="term" value="P:defense response to fungus"/>
    <property type="evidence" value="ECO:0007669"/>
    <property type="project" value="UniProtKB-KW"/>
</dbReference>
<dbReference type="GO" id="GO:0031640">
    <property type="term" value="P:killing of cells of another organism"/>
    <property type="evidence" value="ECO:0007669"/>
    <property type="project" value="UniProtKB-KW"/>
</dbReference>
<dbReference type="InterPro" id="IPR007962">
    <property type="entry name" value="Bombinin"/>
</dbReference>
<dbReference type="Pfam" id="PF05298">
    <property type="entry name" value="Bombinin"/>
    <property type="match status" value="1"/>
</dbReference>
<organism>
    <name type="scientific">Bombina maxima</name>
    <name type="common">Giant fire-bellied toad</name>
    <name type="synonym">Chinese red belly toad</name>
    <dbReference type="NCBI Taxonomy" id="161274"/>
    <lineage>
        <taxon>Eukaryota</taxon>
        <taxon>Metazoa</taxon>
        <taxon>Chordata</taxon>
        <taxon>Craniata</taxon>
        <taxon>Vertebrata</taxon>
        <taxon>Euteleostomi</taxon>
        <taxon>Amphibia</taxon>
        <taxon>Batrachia</taxon>
        <taxon>Anura</taxon>
        <taxon>Bombinatoridae</taxon>
        <taxon>Bombina</taxon>
    </lineage>
</organism>
<keyword id="KW-0027">Amidation</keyword>
<keyword id="KW-0878">Amphibian defense peptide</keyword>
<keyword id="KW-0044">Antibiotic</keyword>
<keyword id="KW-0929">Antimicrobial</keyword>
<keyword id="KW-0165">Cleavage on pair of basic residues</keyword>
<keyword id="KW-0204">Cytolysis</keyword>
<keyword id="KW-0903">Direct protein sequencing</keyword>
<keyword id="KW-0295">Fungicide</keyword>
<keyword id="KW-0354">Hemolysis</keyword>
<keyword id="KW-0964">Secreted</keyword>
<keyword id="KW-0732">Signal</keyword>
<keyword id="KW-0800">Toxin</keyword>
<accession>Q8JHE1</accession>
<accession>Q58T54</accession>
<evidence type="ECO:0000250" key="1"/>
<evidence type="ECO:0000255" key="2"/>
<evidence type="ECO:0000269" key="3">
    <source>
    </source>
</evidence>
<evidence type="ECO:0000269" key="4">
    <source>
    </source>
</evidence>
<evidence type="ECO:0000305" key="5"/>
<name>M3H5_BOMMX</name>
<protein>
    <recommendedName>
        <fullName>Maximins 3/H5</fullName>
    </recommendedName>
    <component>
        <recommendedName>
            <fullName>Maximin-3</fullName>
        </recommendedName>
    </component>
    <component>
        <recommendedName>
            <fullName>Maximin-H5</fullName>
        </recommendedName>
    </component>
</protein>
<reference key="1">
    <citation type="journal article" date="2002" name="Biochem. Biophys. Res. Commun.">
        <title>An anionic antimicrobial peptide from toad Bombina maxima.</title>
        <authorList>
            <person name="Lai R."/>
            <person name="Liu H."/>
            <person name="Lee W.-H."/>
            <person name="Zhang Y."/>
        </authorList>
    </citation>
    <scope>NUCLEOTIDE SEQUENCE [MRNA]</scope>
    <scope>SYNTHESIS OF 124-143</scope>
    <scope>FUNCTION OF MAXIMIN-H5</scope>
    <source>
        <tissue>Skin</tissue>
    </source>
</reference>
<reference key="2">
    <citation type="journal article" date="2005" name="Eur. J. Immunol.">
        <title>Variety of antimicrobial peptides in the Bombina maxima toad and evidence of their rapid diversification.</title>
        <authorList>
            <person name="Lee W.-H."/>
            <person name="Li Y."/>
            <person name="Lai R."/>
            <person name="Li S."/>
            <person name="Zhang Y."/>
            <person name="Wang W."/>
        </authorList>
    </citation>
    <scope>NUCLEOTIDE SEQUENCE [MRNA]</scope>
    <scope>PROTEIN SEQUENCE OF 44-70 AND 124-143</scope>
    <scope>AMIDATION AT LEU-143</scope>
    <scope>MASS SPECTROMETRY</scope>
    <source>
        <tissue>Skin</tissue>
    </source>
</reference>
<reference key="3">
    <citation type="journal article" date="2002" name="Peptides">
        <title>Antimicrobial peptides from skin secretions of Chinese red belly toad Bombina maxima.</title>
        <authorList>
            <person name="Lai R."/>
            <person name="Zheng Y.-T."/>
            <person name="Shen J.-H."/>
            <person name="Liu G.-J."/>
            <person name="Liu H."/>
            <person name="Lee W.-H."/>
            <person name="Tang S.-Z."/>
            <person name="Zhang Y."/>
        </authorList>
    </citation>
    <scope>PROTEIN SEQUENCE OF 44-70</scope>
    <scope>MASS SPECTROMETRY</scope>
    <scope>FUNCTION OF MAXIMIN-3</scope>
</reference>
<sequence length="144" mass="16205">MNFKYIFAVSFLIASAYARSVQNDEQSLSQRDVLEEESLREIRGIGGKILSGLKTALKGAAKELASTYLHRKRTAEEHEEMKRLEAVMRDLDSLDYPEEASERETRGFNQDEIANLFTKKEKRILGPVLGLVSDTLDDVLGILG</sequence>
<comment type="function">
    <text>Maximin-3 shows antibacterial activity against both Gram-positive and Gram-negative bacteria. It also shows antimicrobial activity against the fungus C.albicans, but not against A.flavus nor P.uticale. It has little hemolytic activity. It possess a significant cytotoxicity against tumor cell lines. It possess a significant anti-HIV activity. It shows high spermicidal activity.</text>
</comment>
<comment type="function">
    <text>Maximin-H5 shows antibacterial activity only against the Gram-positive bacteria S.aureus. The other bacterial and fungal strains tested were resistant to it. The presence of metal ions, like Zn(2+) and Mg(2+), did not increase its antimicrobial potency. Does not show hemolytic activity (in a concentration up to 80 uM).</text>
</comment>
<comment type="subcellular location">
    <subcellularLocation>
        <location>Secreted</location>
    </subcellularLocation>
</comment>
<comment type="tissue specificity">
    <text>Expressed by the skin glands.</text>
</comment>
<comment type="mass spectrometry" mass="2698.0" method="FAB" evidence="3">
    <molecule>Maximin-3</molecule>
</comment>
<comment type="similarity">
    <text evidence="5">Belongs to the bombinin family.</text>
</comment>
<proteinExistence type="evidence at protein level"/>